<sequence>MAANIIATKAATKMASKKEHQYCLLDSQEKRHGQHPFSFELKPYGQTGGNIIGVQGSLTHVIKMIVFPFMIPFPLQKTHIDDFIGGRVYLFFKELDMQAVSDVNGMQYHFEFKVVPVSSNQVELLPVNNKYKFTYAIPEVQYLTPIFYDLSGPLDFPLDTLSVHVDSLTNHIHLPIQNHNLTKGDRVFISGYKHPQTIESYKNNTIFIKCIPPLLSEKINLYIPKNRIRIPLYFKSLKTSK</sequence>
<evidence type="ECO:0000250" key="1">
    <source>
        <dbReference type="UniProtKB" id="Q65190"/>
    </source>
</evidence>
<evidence type="ECO:0000305" key="2"/>
<keyword id="KW-0426">Late protein</keyword>
<keyword id="KW-0946">Virion</keyword>
<organism>
    <name type="scientific">African swine fever virus (isolate Tick/Malawi/Lil 20-1/1983)</name>
    <name type="common">ASFV</name>
    <dbReference type="NCBI Taxonomy" id="10500"/>
    <lineage>
        <taxon>Viruses</taxon>
        <taxon>Varidnaviria</taxon>
        <taxon>Bamfordvirae</taxon>
        <taxon>Nucleocytoviricota</taxon>
        <taxon>Pokkesviricetes</taxon>
        <taxon>Asfuvirales</taxon>
        <taxon>Asfarviridae</taxon>
        <taxon>Asfivirus</taxon>
        <taxon>African swine fever virus</taxon>
    </lineage>
</organism>
<comment type="function">
    <text evidence="1">Forms the penton at the fivefold vertices of the icosahedral capsid (By similarity). Together with the minor capsid proteins (p17, p49, and M1249L), forms a complicated network immediately below the outer capsid shell, stabilizing the whole capsid (By similarity).</text>
</comment>
<comment type="subcellular location">
    <subcellularLocation>
        <location evidence="1">Virion</location>
    </subcellularLocation>
</comment>
<comment type="induction">
    <text evidence="2">Expressed in the late phase of the viral replicative cycle.</text>
</comment>
<comment type="similarity">
    <text evidence="2">Belongs to the asfivirus H240R family.</text>
</comment>
<protein>
    <recommendedName>
        <fullName evidence="1">Penton protein H240R</fullName>
        <shortName>pH240R</shortName>
    </recommendedName>
</protein>
<organismHost>
    <name type="scientific">Ornithodoros</name>
    <name type="common">relapsing fever ticks</name>
    <dbReference type="NCBI Taxonomy" id="6937"/>
</organismHost>
<organismHost>
    <name type="scientific">Phacochoerus aethiopicus</name>
    <name type="common">Warthog</name>
    <dbReference type="NCBI Taxonomy" id="85517"/>
</organismHost>
<organismHost>
    <name type="scientific">Phacochoerus africanus</name>
    <name type="common">Warthog</name>
    <dbReference type="NCBI Taxonomy" id="41426"/>
</organismHost>
<organismHost>
    <name type="scientific">Potamochoerus larvatus</name>
    <name type="common">Bushpig</name>
    <dbReference type="NCBI Taxonomy" id="273792"/>
</organismHost>
<organismHost>
    <name type="scientific">Sus scrofa</name>
    <name type="common">Pig</name>
    <dbReference type="NCBI Taxonomy" id="9823"/>
</organismHost>
<proteinExistence type="inferred from homology"/>
<accession>Q65235</accession>
<feature type="chain" id="PRO_0000373601" description="Penton protein H240R">
    <location>
        <begin position="1"/>
        <end position="241"/>
    </location>
</feature>
<dbReference type="EMBL" id="X71982">
    <property type="protein sequence ID" value="CAA50827.1"/>
    <property type="molecule type" value="Genomic_DNA"/>
</dbReference>
<dbReference type="EMBL" id="AY261361">
    <property type="status" value="NOT_ANNOTATED_CDS"/>
    <property type="molecule type" value="Genomic_DNA"/>
</dbReference>
<dbReference type="Proteomes" id="UP000000860">
    <property type="component" value="Segment"/>
</dbReference>
<dbReference type="GO" id="GO:0044423">
    <property type="term" value="C:virion component"/>
    <property type="evidence" value="ECO:0007669"/>
    <property type="project" value="UniProtKB-KW"/>
</dbReference>
<gene>
    <name type="ordered locus">Mal-128</name>
    <name type="ORF">j7R</name>
</gene>
<reference key="1">
    <citation type="journal article" date="1994" name="J. Gen. Virol.">
        <title>Nucleotide sequence of a 55 kbp region from the right end of the genome of a pathogenic African swine fever virus isolate (Malawi LIL20/1).</title>
        <authorList>
            <person name="Dixon L.K."/>
            <person name="Twigg S.R.F."/>
            <person name="Baylis S.A."/>
            <person name="Vydelingum S."/>
            <person name="Bristow C."/>
            <person name="Hammond J.M."/>
            <person name="Smith G.L."/>
        </authorList>
    </citation>
    <scope>NUCLEOTIDE SEQUENCE [GENOMIC DNA]</scope>
</reference>
<reference key="2">
    <citation type="submission" date="2003-03" db="EMBL/GenBank/DDBJ databases">
        <title>African swine fever virus genomes.</title>
        <authorList>
            <person name="Kutish G.F."/>
            <person name="Rock D.L."/>
        </authorList>
    </citation>
    <scope>NUCLEOTIDE SEQUENCE [LARGE SCALE GENOMIC DNA]</scope>
</reference>
<name>CAPSP_ASFM2</name>